<comment type="subcellular location">
    <subcellularLocation>
        <location evidence="1">Cell membrane</location>
        <topology evidence="1">Lipid-anchor</topology>
    </subcellularLocation>
</comment>
<proteinExistence type="inferred from homology"/>
<accession>P0C538</accession>
<accession>Q9RPX8</accession>
<dbReference type="EMBL" id="EF208927">
    <property type="protein sequence ID" value="ABM66831.1"/>
    <property type="molecule type" value="Genomic_DNA"/>
</dbReference>
<dbReference type="EMBL" id="CP000709">
    <property type="status" value="NOT_ANNOTATED_CDS"/>
    <property type="molecule type" value="Genomic_DNA"/>
</dbReference>
<dbReference type="RefSeq" id="WP_002966516.1">
    <property type="nucleotide sequence ID" value="NC_009504.1"/>
</dbReference>
<dbReference type="Proteomes" id="UP000006383">
    <property type="component" value="Chromosome II"/>
</dbReference>
<dbReference type="GO" id="GO:0005886">
    <property type="term" value="C:plasma membrane"/>
    <property type="evidence" value="ECO:0007669"/>
    <property type="project" value="UniProtKB-SubCell"/>
</dbReference>
<dbReference type="InterPro" id="IPR012640">
    <property type="entry name" value="Membr_lipoprot_lipid_attach_CS"/>
</dbReference>
<dbReference type="Pfam" id="PF08139">
    <property type="entry name" value="LPAM_1"/>
    <property type="match status" value="1"/>
</dbReference>
<dbReference type="PROSITE" id="PS51257">
    <property type="entry name" value="PROKAR_LIPOPROTEIN"/>
    <property type="match status" value="1"/>
</dbReference>
<feature type="signal peptide" evidence="1">
    <location>
        <begin position="1"/>
        <end position="16"/>
    </location>
</feature>
<feature type="chain" id="PRO_0000291443" description="Type IV secretion system putative lipoprotein virB7">
    <location>
        <begin position="17"/>
        <end position="57"/>
    </location>
</feature>
<feature type="region of interest" description="Disordered" evidence="2">
    <location>
        <begin position="35"/>
        <end position="57"/>
    </location>
</feature>
<feature type="lipid moiety-binding region" description="N-palmitoyl cysteine" evidence="1">
    <location>
        <position position="17"/>
    </location>
</feature>
<feature type="lipid moiety-binding region" description="S-diacylglycerol cysteine" evidence="1">
    <location>
        <position position="17"/>
    </location>
</feature>
<organism>
    <name type="scientific">Brucella ovis (strain ATCC 25840 / 63/290 / NCTC 10512)</name>
    <dbReference type="NCBI Taxonomy" id="444178"/>
    <lineage>
        <taxon>Bacteria</taxon>
        <taxon>Pseudomonadati</taxon>
        <taxon>Pseudomonadota</taxon>
        <taxon>Alphaproteobacteria</taxon>
        <taxon>Hyphomicrobiales</taxon>
        <taxon>Brucellaceae</taxon>
        <taxon>Brucella/Ochrobactrum group</taxon>
        <taxon>Brucella</taxon>
    </lineage>
</organism>
<protein>
    <recommendedName>
        <fullName>Type IV secretion system putative lipoprotein virB7</fullName>
    </recommendedName>
</protein>
<name>VIRB7_BRUO2</name>
<evidence type="ECO:0000255" key="1">
    <source>
        <dbReference type="PROSITE-ProRule" id="PRU00303"/>
    </source>
</evidence>
<evidence type="ECO:0000256" key="2">
    <source>
        <dbReference type="SAM" id="MobiDB-lite"/>
    </source>
</evidence>
<gene>
    <name type="primary">virB7</name>
    <name type="ordered locus">BOV_A0057.1</name>
</gene>
<reference key="1">
    <citation type="submission" date="2006-12" db="EMBL/GenBank/DDBJ databases">
        <authorList>
            <person name="Wang Y."/>
            <person name="Chen C."/>
            <person name="Wang P."/>
        </authorList>
    </citation>
    <scope>NUCLEOTIDE SEQUENCE [GENOMIC DNA]</scope>
</reference>
<reference key="2">
    <citation type="journal article" date="2009" name="PLoS ONE">
        <title>Genome degradation in Brucella ovis corresponds with narrowing of its host range and tissue tropism.</title>
        <authorList>
            <person name="Tsolis R.M."/>
            <person name="Seshadri R."/>
            <person name="Santos R.L."/>
            <person name="Sangari F.J."/>
            <person name="Lobo J.M."/>
            <person name="de Jong M.F."/>
            <person name="Ren Q."/>
            <person name="Myers G."/>
            <person name="Brinkac L.M."/>
            <person name="Nelson W.C."/>
            <person name="Deboy R.T."/>
            <person name="Angiuoli S."/>
            <person name="Khouri H."/>
            <person name="Dimitrov G."/>
            <person name="Robinson J.R."/>
            <person name="Mulligan S."/>
            <person name="Walker R.L."/>
            <person name="Elzer P.E."/>
            <person name="Hassan K.A."/>
            <person name="Paulsen I.T."/>
        </authorList>
    </citation>
    <scope>NUCLEOTIDE SEQUENCE [LARGE SCALE GENOMIC DNA]</scope>
    <source>
        <strain>ATCC 25840 / 63/290 / NCTC 10512</strain>
    </source>
</reference>
<keyword id="KW-1003">Cell membrane</keyword>
<keyword id="KW-0449">Lipoprotein</keyword>
<keyword id="KW-0472">Membrane</keyword>
<keyword id="KW-0564">Palmitate</keyword>
<keyword id="KW-0732">Signal</keyword>
<keyword id="KW-0843">Virulence</keyword>
<sequence>MKKVILAFVATAFLAGCTTTGPAVVPVLDGKPRVPVNKSVPAKPPLAQPNPVDTYED</sequence>